<reference key="1">
    <citation type="submission" date="2007-11" db="EMBL/GenBank/DDBJ databases">
        <authorList>
            <consortium name="The Salmonella enterica serovar Paratyphi B Genome Sequencing Project"/>
            <person name="McClelland M."/>
            <person name="Sanderson E.K."/>
            <person name="Porwollik S."/>
            <person name="Spieth J."/>
            <person name="Clifton W.S."/>
            <person name="Fulton R."/>
            <person name="Cordes M."/>
            <person name="Wollam A."/>
            <person name="Shah N."/>
            <person name="Pepin K."/>
            <person name="Bhonagiri V."/>
            <person name="Nash W."/>
            <person name="Johnson M."/>
            <person name="Thiruvilangam P."/>
            <person name="Wilson R."/>
        </authorList>
    </citation>
    <scope>NUCLEOTIDE SEQUENCE [LARGE SCALE GENOMIC DNA]</scope>
    <source>
        <strain>ATCC BAA-1250 / SPB7</strain>
    </source>
</reference>
<gene>
    <name evidence="1" type="primary">gcvH</name>
    <name type="ordered locus">SPAB_03803</name>
</gene>
<proteinExistence type="inferred from homology"/>
<organism>
    <name type="scientific">Salmonella paratyphi B (strain ATCC BAA-1250 / SPB7)</name>
    <dbReference type="NCBI Taxonomy" id="1016998"/>
    <lineage>
        <taxon>Bacteria</taxon>
        <taxon>Pseudomonadati</taxon>
        <taxon>Pseudomonadota</taxon>
        <taxon>Gammaproteobacteria</taxon>
        <taxon>Enterobacterales</taxon>
        <taxon>Enterobacteriaceae</taxon>
        <taxon>Salmonella</taxon>
    </lineage>
</organism>
<comment type="function">
    <text evidence="1">The glycine cleavage system catalyzes the degradation of glycine. The H protein shuttles the methylamine group of glycine from the P protein to the T protein.</text>
</comment>
<comment type="cofactor">
    <cofactor evidence="1">
        <name>(R)-lipoate</name>
        <dbReference type="ChEBI" id="CHEBI:83088"/>
    </cofactor>
    <text evidence="1">Binds 1 lipoyl cofactor covalently.</text>
</comment>
<comment type="subunit">
    <text evidence="1">The glycine cleavage system is composed of four proteins: P, T, L and H.</text>
</comment>
<comment type="similarity">
    <text evidence="1">Belongs to the GcvH family.</text>
</comment>
<evidence type="ECO:0000255" key="1">
    <source>
        <dbReference type="HAMAP-Rule" id="MF_00272"/>
    </source>
</evidence>
<evidence type="ECO:0000255" key="2">
    <source>
        <dbReference type="PROSITE-ProRule" id="PRU01066"/>
    </source>
</evidence>
<accession>A9N3N2</accession>
<keyword id="KW-0450">Lipoyl</keyword>
<protein>
    <recommendedName>
        <fullName evidence="1">Glycine cleavage system H protein</fullName>
    </recommendedName>
</protein>
<name>GCSH_SALPB</name>
<sequence length="129" mass="13839">MSNVPAELKYSKEHEWLRKEADGTYTVGITEHAQELLGDMVFVDLPEVGATVSAGDDCAVAESVKAASDIYAPVSGEIVAVNDALSDSPELVNSEPYVGGWIFKIKASDESELESLLDATAYEALLEDE</sequence>
<dbReference type="EMBL" id="CP000886">
    <property type="protein sequence ID" value="ABX69135.1"/>
    <property type="molecule type" value="Genomic_DNA"/>
</dbReference>
<dbReference type="RefSeq" id="WP_001736381.1">
    <property type="nucleotide sequence ID" value="NC_010102.1"/>
</dbReference>
<dbReference type="SMR" id="A9N3N2"/>
<dbReference type="KEGG" id="spq:SPAB_03803"/>
<dbReference type="PATRIC" id="fig|1016998.12.peg.3584"/>
<dbReference type="HOGENOM" id="CLU_097408_2_1_6"/>
<dbReference type="BioCyc" id="SENT1016998:SPAB_RS15480-MONOMER"/>
<dbReference type="Proteomes" id="UP000008556">
    <property type="component" value="Chromosome"/>
</dbReference>
<dbReference type="GO" id="GO:0005829">
    <property type="term" value="C:cytosol"/>
    <property type="evidence" value="ECO:0007669"/>
    <property type="project" value="TreeGrafter"/>
</dbReference>
<dbReference type="GO" id="GO:0005960">
    <property type="term" value="C:glycine cleavage complex"/>
    <property type="evidence" value="ECO:0007669"/>
    <property type="project" value="InterPro"/>
</dbReference>
<dbReference type="GO" id="GO:0019464">
    <property type="term" value="P:glycine decarboxylation via glycine cleavage system"/>
    <property type="evidence" value="ECO:0007669"/>
    <property type="project" value="UniProtKB-UniRule"/>
</dbReference>
<dbReference type="CDD" id="cd06848">
    <property type="entry name" value="GCS_H"/>
    <property type="match status" value="1"/>
</dbReference>
<dbReference type="FunFam" id="2.40.50.100:FF:000011">
    <property type="entry name" value="Glycine cleavage system H protein"/>
    <property type="match status" value="1"/>
</dbReference>
<dbReference type="Gene3D" id="2.40.50.100">
    <property type="match status" value="1"/>
</dbReference>
<dbReference type="HAMAP" id="MF_00272">
    <property type="entry name" value="GcvH"/>
    <property type="match status" value="1"/>
</dbReference>
<dbReference type="InterPro" id="IPR003016">
    <property type="entry name" value="2-oxoA_DH_lipoyl-BS"/>
</dbReference>
<dbReference type="InterPro" id="IPR000089">
    <property type="entry name" value="Biotin_lipoyl"/>
</dbReference>
<dbReference type="InterPro" id="IPR002930">
    <property type="entry name" value="GCV_H"/>
</dbReference>
<dbReference type="InterPro" id="IPR033753">
    <property type="entry name" value="GCV_H/Fam206"/>
</dbReference>
<dbReference type="InterPro" id="IPR017453">
    <property type="entry name" value="GCV_H_sub"/>
</dbReference>
<dbReference type="InterPro" id="IPR011053">
    <property type="entry name" value="Single_hybrid_motif"/>
</dbReference>
<dbReference type="NCBIfam" id="TIGR00527">
    <property type="entry name" value="gcvH"/>
    <property type="match status" value="1"/>
</dbReference>
<dbReference type="NCBIfam" id="NF002270">
    <property type="entry name" value="PRK01202.1"/>
    <property type="match status" value="1"/>
</dbReference>
<dbReference type="PANTHER" id="PTHR11715">
    <property type="entry name" value="GLYCINE CLEAVAGE SYSTEM H PROTEIN"/>
    <property type="match status" value="1"/>
</dbReference>
<dbReference type="PANTHER" id="PTHR11715:SF3">
    <property type="entry name" value="GLYCINE CLEAVAGE SYSTEM H PROTEIN-RELATED"/>
    <property type="match status" value="1"/>
</dbReference>
<dbReference type="Pfam" id="PF01597">
    <property type="entry name" value="GCV_H"/>
    <property type="match status" value="1"/>
</dbReference>
<dbReference type="SUPFAM" id="SSF51230">
    <property type="entry name" value="Single hybrid motif"/>
    <property type="match status" value="1"/>
</dbReference>
<dbReference type="PROSITE" id="PS50968">
    <property type="entry name" value="BIOTINYL_LIPOYL"/>
    <property type="match status" value="1"/>
</dbReference>
<dbReference type="PROSITE" id="PS00189">
    <property type="entry name" value="LIPOYL"/>
    <property type="match status" value="1"/>
</dbReference>
<feature type="chain" id="PRO_1000078738" description="Glycine cleavage system H protein">
    <location>
        <begin position="1"/>
        <end position="129"/>
    </location>
</feature>
<feature type="domain" description="Lipoyl-binding" evidence="2">
    <location>
        <begin position="24"/>
        <end position="106"/>
    </location>
</feature>
<feature type="modified residue" description="N6-lipoyllysine" evidence="1">
    <location>
        <position position="65"/>
    </location>
</feature>